<dbReference type="EC" id="2.4.2.7" evidence="1"/>
<dbReference type="EMBL" id="CP000767">
    <property type="protein sequence ID" value="EAT99477.1"/>
    <property type="molecule type" value="Genomic_DNA"/>
</dbReference>
<dbReference type="RefSeq" id="WP_009650138.1">
    <property type="nucleotide sequence ID" value="NC_009715.2"/>
</dbReference>
<dbReference type="SMR" id="A7GXJ2"/>
<dbReference type="STRING" id="360105.CCV52592_1315"/>
<dbReference type="KEGG" id="ccv:CCV52592_1315"/>
<dbReference type="HOGENOM" id="CLU_063339_3_0_7"/>
<dbReference type="OrthoDB" id="9803963at2"/>
<dbReference type="UniPathway" id="UPA00588">
    <property type="reaction ID" value="UER00646"/>
</dbReference>
<dbReference type="Proteomes" id="UP000006380">
    <property type="component" value="Chromosome"/>
</dbReference>
<dbReference type="GO" id="GO:0005737">
    <property type="term" value="C:cytoplasm"/>
    <property type="evidence" value="ECO:0007669"/>
    <property type="project" value="UniProtKB-SubCell"/>
</dbReference>
<dbReference type="GO" id="GO:0003999">
    <property type="term" value="F:adenine phosphoribosyltransferase activity"/>
    <property type="evidence" value="ECO:0007669"/>
    <property type="project" value="UniProtKB-UniRule"/>
</dbReference>
<dbReference type="GO" id="GO:0006168">
    <property type="term" value="P:adenine salvage"/>
    <property type="evidence" value="ECO:0007669"/>
    <property type="project" value="InterPro"/>
</dbReference>
<dbReference type="GO" id="GO:0044209">
    <property type="term" value="P:AMP salvage"/>
    <property type="evidence" value="ECO:0007669"/>
    <property type="project" value="UniProtKB-UniRule"/>
</dbReference>
<dbReference type="GO" id="GO:0006166">
    <property type="term" value="P:purine ribonucleoside salvage"/>
    <property type="evidence" value="ECO:0007669"/>
    <property type="project" value="UniProtKB-KW"/>
</dbReference>
<dbReference type="CDD" id="cd06223">
    <property type="entry name" value="PRTases_typeI"/>
    <property type="match status" value="1"/>
</dbReference>
<dbReference type="FunFam" id="3.40.50.2020:FF:000021">
    <property type="entry name" value="Adenine phosphoribosyltransferase"/>
    <property type="match status" value="1"/>
</dbReference>
<dbReference type="Gene3D" id="3.40.50.2020">
    <property type="match status" value="1"/>
</dbReference>
<dbReference type="HAMAP" id="MF_00004">
    <property type="entry name" value="Aden_phosphoribosyltr"/>
    <property type="match status" value="1"/>
</dbReference>
<dbReference type="InterPro" id="IPR005764">
    <property type="entry name" value="Ade_phspho_trans"/>
</dbReference>
<dbReference type="InterPro" id="IPR050120">
    <property type="entry name" value="Adenine_PRTase"/>
</dbReference>
<dbReference type="InterPro" id="IPR000836">
    <property type="entry name" value="PRibTrfase_dom"/>
</dbReference>
<dbReference type="InterPro" id="IPR029057">
    <property type="entry name" value="PRTase-like"/>
</dbReference>
<dbReference type="NCBIfam" id="TIGR01090">
    <property type="entry name" value="apt"/>
    <property type="match status" value="1"/>
</dbReference>
<dbReference type="NCBIfam" id="NF002634">
    <property type="entry name" value="PRK02304.1-3"/>
    <property type="match status" value="1"/>
</dbReference>
<dbReference type="NCBIfam" id="NF002636">
    <property type="entry name" value="PRK02304.1-5"/>
    <property type="match status" value="1"/>
</dbReference>
<dbReference type="PANTHER" id="PTHR11776">
    <property type="entry name" value="ADENINE PHOSPHORIBOSYLTRANSFERASE"/>
    <property type="match status" value="1"/>
</dbReference>
<dbReference type="PANTHER" id="PTHR11776:SF7">
    <property type="entry name" value="PHOSPHORIBOSYLTRANSFERASE DOMAIN-CONTAINING PROTEIN"/>
    <property type="match status" value="1"/>
</dbReference>
<dbReference type="Pfam" id="PF00156">
    <property type="entry name" value="Pribosyltran"/>
    <property type="match status" value="1"/>
</dbReference>
<dbReference type="SUPFAM" id="SSF53271">
    <property type="entry name" value="PRTase-like"/>
    <property type="match status" value="1"/>
</dbReference>
<dbReference type="PROSITE" id="PS00103">
    <property type="entry name" value="PUR_PYR_PR_TRANSFER"/>
    <property type="match status" value="1"/>
</dbReference>
<proteinExistence type="inferred from homology"/>
<organism>
    <name type="scientific">Campylobacter curvus (strain 525.92)</name>
    <dbReference type="NCBI Taxonomy" id="360105"/>
    <lineage>
        <taxon>Bacteria</taxon>
        <taxon>Pseudomonadati</taxon>
        <taxon>Campylobacterota</taxon>
        <taxon>Epsilonproteobacteria</taxon>
        <taxon>Campylobacterales</taxon>
        <taxon>Campylobacteraceae</taxon>
        <taxon>Campylobacter</taxon>
    </lineage>
</organism>
<comment type="function">
    <text evidence="1">Catalyzes a salvage reaction resulting in the formation of AMP, that is energically less costly than de novo synthesis.</text>
</comment>
<comment type="catalytic activity">
    <reaction evidence="1">
        <text>AMP + diphosphate = 5-phospho-alpha-D-ribose 1-diphosphate + adenine</text>
        <dbReference type="Rhea" id="RHEA:16609"/>
        <dbReference type="ChEBI" id="CHEBI:16708"/>
        <dbReference type="ChEBI" id="CHEBI:33019"/>
        <dbReference type="ChEBI" id="CHEBI:58017"/>
        <dbReference type="ChEBI" id="CHEBI:456215"/>
        <dbReference type="EC" id="2.4.2.7"/>
    </reaction>
</comment>
<comment type="pathway">
    <text evidence="1">Purine metabolism; AMP biosynthesis via salvage pathway; AMP from adenine: step 1/1.</text>
</comment>
<comment type="subunit">
    <text evidence="1">Homodimer.</text>
</comment>
<comment type="subcellular location">
    <subcellularLocation>
        <location evidence="1">Cytoplasm</location>
    </subcellularLocation>
</comment>
<comment type="similarity">
    <text evidence="1">Belongs to the purine/pyrimidine phosphoribosyltransferase family.</text>
</comment>
<name>APT_CAMC5</name>
<gene>
    <name evidence="1" type="primary">apt</name>
    <name type="ordered locus">Ccur92_06300</name>
    <name type="ORF">CCV52592_1315</name>
</gene>
<sequence length="182" mass="20473">MKELNKKEKEYLLNSIRAIKDFPKPGIVFRDITTLLNDKEAFNFLMDHLTARYENFGIDFIAGIESRGFIFGAALAARLRLPFVPIRKPKKLPYITISQKYSLEYGVDEVQIHIDAFGEKEDARVLLIDDLIATGGTAKASVELIDQTKAKCVEACFLIDLKELGGSGTLKKLTKIYSVLEI</sequence>
<evidence type="ECO:0000255" key="1">
    <source>
        <dbReference type="HAMAP-Rule" id="MF_00004"/>
    </source>
</evidence>
<protein>
    <recommendedName>
        <fullName evidence="1">Adenine phosphoribosyltransferase</fullName>
        <shortName evidence="1">APRT</shortName>
        <ecNumber evidence="1">2.4.2.7</ecNumber>
    </recommendedName>
</protein>
<reference key="1">
    <citation type="submission" date="2007-07" db="EMBL/GenBank/DDBJ databases">
        <title>Genome sequence of Campylobacter curvus 525.92 isolated from human feces.</title>
        <authorList>
            <person name="Fouts D.E."/>
            <person name="Mongodin E.F."/>
            <person name="Puiu D."/>
            <person name="Sebastian Y."/>
            <person name="Miller W.G."/>
            <person name="Mandrell R.E."/>
            <person name="Lastovica A.J."/>
            <person name="Nelson K.E."/>
        </authorList>
    </citation>
    <scope>NUCLEOTIDE SEQUENCE [LARGE SCALE GENOMIC DNA]</scope>
    <source>
        <strain>525.92</strain>
    </source>
</reference>
<keyword id="KW-0963">Cytoplasm</keyword>
<keyword id="KW-0328">Glycosyltransferase</keyword>
<keyword id="KW-0660">Purine salvage</keyword>
<keyword id="KW-1185">Reference proteome</keyword>
<keyword id="KW-0808">Transferase</keyword>
<feature type="chain" id="PRO_1000000267" description="Adenine phosphoribosyltransferase">
    <location>
        <begin position="1"/>
        <end position="182"/>
    </location>
</feature>
<accession>A7GXJ2</accession>